<sequence>MSYPDDYSTDVEKNKMDLKEFKEKTQIAELESKVLRLELKNKDISRENVQIKKENEILKRELDKLRIPPLILGTILDRVNERKAVVKSSTGPNFLVNLSQFVDPEDIVPGARVCLNQQTLAIVEVLPKEKDYRAMAMEIEEKPDISFEDIGGLNNQIRDIKEVVELPLKNPELFEKVGIVPPKGVLLYGPPGTGKTLLAKAVAYETNASFVRVVGSELVKKFIGEGAKLVRDVFKLAKEKSPCIIFIDEIDAVASKRTESLTGGDREVQRTLMQLLAEMDGFDSRGDVKIIAATNRPDILDPAILRPGRFDRIIEISMPDEDGRLDILKIHTEKMNLKGVDLREVAKLAENMVGADLKAVCTEAGMFAIREEREFIKMDDFKEAISKITGKKEKCSYDMPQLTVMYG</sequence>
<name>PAN_METM6</name>
<dbReference type="EMBL" id="CP000867">
    <property type="protein sequence ID" value="ABX01839.1"/>
    <property type="molecule type" value="Genomic_DNA"/>
</dbReference>
<dbReference type="SMR" id="A9A916"/>
<dbReference type="STRING" id="444158.MmarC6_1024"/>
<dbReference type="KEGG" id="mmx:MmarC6_1024"/>
<dbReference type="eggNOG" id="arCOG01306">
    <property type="taxonomic scope" value="Archaea"/>
</dbReference>
<dbReference type="HOGENOM" id="CLU_000688_2_0_2"/>
<dbReference type="OrthoDB" id="77269at2157"/>
<dbReference type="PhylomeDB" id="A9A916"/>
<dbReference type="GO" id="GO:0005737">
    <property type="term" value="C:cytoplasm"/>
    <property type="evidence" value="ECO:0007669"/>
    <property type="project" value="UniProtKB-SubCell"/>
</dbReference>
<dbReference type="GO" id="GO:0022623">
    <property type="term" value="C:proteasome-activating nucleotidase complex"/>
    <property type="evidence" value="ECO:0007669"/>
    <property type="project" value="UniProtKB-UniRule"/>
</dbReference>
<dbReference type="GO" id="GO:0005524">
    <property type="term" value="F:ATP binding"/>
    <property type="evidence" value="ECO:0007669"/>
    <property type="project" value="UniProtKB-UniRule"/>
</dbReference>
<dbReference type="GO" id="GO:0016887">
    <property type="term" value="F:ATP hydrolysis activity"/>
    <property type="evidence" value="ECO:0007669"/>
    <property type="project" value="UniProtKB-UniRule"/>
</dbReference>
<dbReference type="GO" id="GO:0010498">
    <property type="term" value="P:proteasomal protein catabolic process"/>
    <property type="evidence" value="ECO:0007669"/>
    <property type="project" value="UniProtKB-UniRule"/>
</dbReference>
<dbReference type="GO" id="GO:0043335">
    <property type="term" value="P:protein unfolding"/>
    <property type="evidence" value="ECO:0007669"/>
    <property type="project" value="UniProtKB-UniRule"/>
</dbReference>
<dbReference type="CDD" id="cd19502">
    <property type="entry name" value="RecA-like_PAN_like"/>
    <property type="match status" value="1"/>
</dbReference>
<dbReference type="FunFam" id="3.40.50.300:FF:000033">
    <property type="entry name" value="26S protease regulatory subunit 6B"/>
    <property type="match status" value="1"/>
</dbReference>
<dbReference type="FunFam" id="1.10.8.60:FF:000006">
    <property type="entry name" value="26S protease regulatory subunit 8"/>
    <property type="match status" value="1"/>
</dbReference>
<dbReference type="Gene3D" id="1.10.8.60">
    <property type="match status" value="1"/>
</dbReference>
<dbReference type="Gene3D" id="2.40.50.140">
    <property type="entry name" value="Nucleic acid-binding proteins"/>
    <property type="match status" value="1"/>
</dbReference>
<dbReference type="Gene3D" id="3.40.50.300">
    <property type="entry name" value="P-loop containing nucleotide triphosphate hydrolases"/>
    <property type="match status" value="1"/>
</dbReference>
<dbReference type="HAMAP" id="MF_00553">
    <property type="entry name" value="PAN"/>
    <property type="match status" value="1"/>
</dbReference>
<dbReference type="InterPro" id="IPR050221">
    <property type="entry name" value="26S_Proteasome_ATPase"/>
</dbReference>
<dbReference type="InterPro" id="IPR003593">
    <property type="entry name" value="AAA+_ATPase"/>
</dbReference>
<dbReference type="InterPro" id="IPR041569">
    <property type="entry name" value="AAA_lid_3"/>
</dbReference>
<dbReference type="InterPro" id="IPR003959">
    <property type="entry name" value="ATPase_AAA_core"/>
</dbReference>
<dbReference type="InterPro" id="IPR003960">
    <property type="entry name" value="ATPase_AAA_CS"/>
</dbReference>
<dbReference type="InterPro" id="IPR012340">
    <property type="entry name" value="NA-bd_OB-fold"/>
</dbReference>
<dbReference type="InterPro" id="IPR023501">
    <property type="entry name" value="Nucleotidase_PAN"/>
</dbReference>
<dbReference type="InterPro" id="IPR027417">
    <property type="entry name" value="P-loop_NTPase"/>
</dbReference>
<dbReference type="InterPro" id="IPR032501">
    <property type="entry name" value="Prot_ATP_ID_OB_2nd"/>
</dbReference>
<dbReference type="NCBIfam" id="NF003069">
    <property type="entry name" value="PRK03992.1"/>
    <property type="match status" value="1"/>
</dbReference>
<dbReference type="NCBIfam" id="TIGR01242">
    <property type="entry name" value="proteasome-activating nucleotidase"/>
    <property type="match status" value="1"/>
</dbReference>
<dbReference type="PANTHER" id="PTHR23073">
    <property type="entry name" value="26S PROTEASOME REGULATORY SUBUNIT"/>
    <property type="match status" value="1"/>
</dbReference>
<dbReference type="Pfam" id="PF00004">
    <property type="entry name" value="AAA"/>
    <property type="match status" value="1"/>
</dbReference>
<dbReference type="Pfam" id="PF17862">
    <property type="entry name" value="AAA_lid_3"/>
    <property type="match status" value="1"/>
</dbReference>
<dbReference type="Pfam" id="PF16450">
    <property type="entry name" value="Prot_ATP_ID_OB_C"/>
    <property type="match status" value="1"/>
</dbReference>
<dbReference type="SMART" id="SM00382">
    <property type="entry name" value="AAA"/>
    <property type="match status" value="1"/>
</dbReference>
<dbReference type="SUPFAM" id="SSF52540">
    <property type="entry name" value="P-loop containing nucleoside triphosphate hydrolases"/>
    <property type="match status" value="1"/>
</dbReference>
<dbReference type="PROSITE" id="PS00674">
    <property type="entry name" value="AAA"/>
    <property type="match status" value="1"/>
</dbReference>
<keyword id="KW-0067">ATP-binding</keyword>
<keyword id="KW-0143">Chaperone</keyword>
<keyword id="KW-0175">Coiled coil</keyword>
<keyword id="KW-0963">Cytoplasm</keyword>
<keyword id="KW-0547">Nucleotide-binding</keyword>
<keyword id="KW-0647">Proteasome</keyword>
<comment type="function">
    <text evidence="1">ATPase which is responsible for recognizing, binding, unfolding and translocation of substrate proteins into the archaeal 20S proteasome core particle. Is essential for opening the gate of the 20S proteasome via an interaction with its C-terminus, thereby allowing substrate entry and access to the site of proteolysis. Thus, the C-termini of the proteasomal ATPase function like a 'key in a lock' to induce gate opening and therefore regulate proteolysis. Unfolding activity requires energy from ATP hydrolysis, whereas ATP binding alone promotes ATPase-20S proteasome association which triggers gate opening, and supports translocation of unfolded substrates.</text>
</comment>
<comment type="subunit">
    <text evidence="1">Homohexamer. The hexameric complex has a two-ring architecture resembling a top hat that caps the 20S proteasome core at one or both ends. Upon ATP-binding, the C-terminus of PAN interacts with the alpha-rings of the proteasome core by binding to the intersubunit pockets.</text>
</comment>
<comment type="subcellular location">
    <subcellularLocation>
        <location evidence="1">Cytoplasm</location>
    </subcellularLocation>
</comment>
<comment type="domain">
    <text evidence="1">Consists of three main regions, an N-terminal coiled-coil domain that may assist in substrate recognition, an interdomain involved in PAN hexamerization, and a C-terminal ATPase domain of the AAA type.</text>
</comment>
<comment type="similarity">
    <text evidence="1">Belongs to the AAA ATPase family.</text>
</comment>
<protein>
    <recommendedName>
        <fullName evidence="1">Proteasome-activating nucleotidase</fullName>
        <shortName evidence="1">PAN</shortName>
    </recommendedName>
    <alternativeName>
        <fullName evidence="1">Proteasomal ATPase</fullName>
    </alternativeName>
    <alternativeName>
        <fullName evidence="1">Proteasome regulatory ATPase</fullName>
    </alternativeName>
    <alternativeName>
        <fullName evidence="1">Proteasome regulatory particle</fullName>
    </alternativeName>
</protein>
<organism>
    <name type="scientific">Methanococcus maripaludis (strain C6 / ATCC BAA-1332)</name>
    <dbReference type="NCBI Taxonomy" id="444158"/>
    <lineage>
        <taxon>Archaea</taxon>
        <taxon>Methanobacteriati</taxon>
        <taxon>Methanobacteriota</taxon>
        <taxon>Methanomada group</taxon>
        <taxon>Methanococci</taxon>
        <taxon>Methanococcales</taxon>
        <taxon>Methanococcaceae</taxon>
        <taxon>Methanococcus</taxon>
    </lineage>
</organism>
<gene>
    <name evidence="1" type="primary">pan</name>
    <name type="ordered locus">MmarC6_1024</name>
</gene>
<reference key="1">
    <citation type="submission" date="2007-10" db="EMBL/GenBank/DDBJ databases">
        <title>Complete sequence of Methanococcus maripaludis C6.</title>
        <authorList>
            <consortium name="US DOE Joint Genome Institute"/>
            <person name="Copeland A."/>
            <person name="Lucas S."/>
            <person name="Lapidus A."/>
            <person name="Barry K."/>
            <person name="Glavina del Rio T."/>
            <person name="Dalin E."/>
            <person name="Tice H."/>
            <person name="Pitluck S."/>
            <person name="Clum A."/>
            <person name="Schmutz J."/>
            <person name="Larimer F."/>
            <person name="Land M."/>
            <person name="Hauser L."/>
            <person name="Kyrpides N."/>
            <person name="Mikhailova N."/>
            <person name="Sieprawska-Lupa M."/>
            <person name="Whitman W.B."/>
            <person name="Richardson P."/>
        </authorList>
    </citation>
    <scope>NUCLEOTIDE SEQUENCE [LARGE SCALE GENOMIC DNA]</scope>
    <source>
        <strain>C6 / ATCC BAA-1332</strain>
    </source>
</reference>
<evidence type="ECO:0000255" key="1">
    <source>
        <dbReference type="HAMAP-Rule" id="MF_00553"/>
    </source>
</evidence>
<feature type="chain" id="PRO_1000129100" description="Proteasome-activating nucleotidase">
    <location>
        <begin position="1"/>
        <end position="407"/>
    </location>
</feature>
<feature type="region of interest" description="Docks into pockets in the proteasome alpha-ring to cause gate opening" evidence="1">
    <location>
        <begin position="405"/>
        <end position="407"/>
    </location>
</feature>
<feature type="coiled-coil region" evidence="1">
    <location>
        <begin position="22"/>
        <end position="67"/>
    </location>
</feature>
<feature type="binding site" evidence="1">
    <location>
        <begin position="192"/>
        <end position="197"/>
    </location>
    <ligand>
        <name>ATP</name>
        <dbReference type="ChEBI" id="CHEBI:30616"/>
    </ligand>
</feature>
<feature type="binding site" evidence="1">
    <location>
        <position position="331"/>
    </location>
    <ligand>
        <name>ATP</name>
        <dbReference type="ChEBI" id="CHEBI:30616"/>
    </ligand>
</feature>
<proteinExistence type="inferred from homology"/>
<accession>A9A916</accession>